<comment type="function">
    <text evidence="1">Promotes the exchange of GDP for GTP in EF-1-alpha/GDP, thus allowing the regeneration of EF-1-alpha/GTP that could then be used to form the ternary complex EF-1-alpha/GTP/AAtRNA.</text>
</comment>
<comment type="similarity">
    <text evidence="1">Belongs to the EF-1-beta/EF-1-delta family.</text>
</comment>
<feature type="chain" id="PRO_1000117326" description="Elongation factor 1-beta">
    <location>
        <begin position="1"/>
        <end position="88"/>
    </location>
</feature>
<evidence type="ECO:0000255" key="1">
    <source>
        <dbReference type="HAMAP-Rule" id="MF_00043"/>
    </source>
</evidence>
<reference key="1">
    <citation type="journal article" date="2016" name="Stand. Genomic Sci.">
        <title>Complete genome sequence of the Antarctic Halorubrum lacusprofundi type strain ACAM 34.</title>
        <authorList>
            <person name="Anderson I.J."/>
            <person name="DasSarma P."/>
            <person name="Lucas S."/>
            <person name="Copeland A."/>
            <person name="Lapidus A."/>
            <person name="Del Rio T.G."/>
            <person name="Tice H."/>
            <person name="Dalin E."/>
            <person name="Bruce D.C."/>
            <person name="Goodwin L."/>
            <person name="Pitluck S."/>
            <person name="Sims D."/>
            <person name="Brettin T.S."/>
            <person name="Detter J.C."/>
            <person name="Han C.S."/>
            <person name="Larimer F."/>
            <person name="Hauser L."/>
            <person name="Land M."/>
            <person name="Ivanova N."/>
            <person name="Richardson P."/>
            <person name="Cavicchioli R."/>
            <person name="DasSarma S."/>
            <person name="Woese C.R."/>
            <person name="Kyrpides N.C."/>
        </authorList>
    </citation>
    <scope>NUCLEOTIDE SEQUENCE [LARGE SCALE GENOMIC DNA]</scope>
    <source>
        <strain>ATCC 49239 / DSM 5036 / JCM 8891 / ACAM 34</strain>
    </source>
</reference>
<name>EF1B_HALLT</name>
<dbReference type="EMBL" id="CP001365">
    <property type="protein sequence ID" value="ACM57917.1"/>
    <property type="molecule type" value="Genomic_DNA"/>
</dbReference>
<dbReference type="RefSeq" id="WP_015911037.1">
    <property type="nucleotide sequence ID" value="NC_012029.1"/>
</dbReference>
<dbReference type="SMR" id="B9LSH0"/>
<dbReference type="GeneID" id="7401958"/>
<dbReference type="KEGG" id="hla:Hlac_2341"/>
<dbReference type="eggNOG" id="arCOG01988">
    <property type="taxonomic scope" value="Archaea"/>
</dbReference>
<dbReference type="HOGENOM" id="CLU_165896_0_0_2"/>
<dbReference type="Proteomes" id="UP000000740">
    <property type="component" value="Chromosome 1"/>
</dbReference>
<dbReference type="GO" id="GO:0003746">
    <property type="term" value="F:translation elongation factor activity"/>
    <property type="evidence" value="ECO:0007669"/>
    <property type="project" value="UniProtKB-UniRule"/>
</dbReference>
<dbReference type="CDD" id="cd00292">
    <property type="entry name" value="EF1B"/>
    <property type="match status" value="1"/>
</dbReference>
<dbReference type="Gene3D" id="3.30.70.60">
    <property type="match status" value="1"/>
</dbReference>
<dbReference type="HAMAP" id="MF_00043">
    <property type="entry name" value="EF1_beta"/>
    <property type="match status" value="1"/>
</dbReference>
<dbReference type="InterPro" id="IPR036219">
    <property type="entry name" value="eEF-1beta-like_sf"/>
</dbReference>
<dbReference type="InterPro" id="IPR014038">
    <property type="entry name" value="EF1B_bsu/dsu_GNE"/>
</dbReference>
<dbReference type="InterPro" id="IPR014717">
    <property type="entry name" value="Transl_elong_EF1B/ribsomal_bS6"/>
</dbReference>
<dbReference type="InterPro" id="IPR004542">
    <property type="entry name" value="Transl_elong_EF1B_B_arc"/>
</dbReference>
<dbReference type="NCBIfam" id="TIGR00489">
    <property type="entry name" value="aEF-1_beta"/>
    <property type="match status" value="1"/>
</dbReference>
<dbReference type="NCBIfam" id="NF001670">
    <property type="entry name" value="PRK00435.1"/>
    <property type="match status" value="1"/>
</dbReference>
<dbReference type="PANTHER" id="PTHR39647">
    <property type="entry name" value="ELONGATION FACTOR 1-BETA"/>
    <property type="match status" value="1"/>
</dbReference>
<dbReference type="PANTHER" id="PTHR39647:SF1">
    <property type="entry name" value="ELONGATION FACTOR 1-BETA"/>
    <property type="match status" value="1"/>
</dbReference>
<dbReference type="Pfam" id="PF00736">
    <property type="entry name" value="EF1_GNE"/>
    <property type="match status" value="1"/>
</dbReference>
<dbReference type="PIRSF" id="PIRSF006521">
    <property type="entry name" value="Transl_elong_EF1B_B_arc"/>
    <property type="match status" value="1"/>
</dbReference>
<dbReference type="SMART" id="SM00888">
    <property type="entry name" value="EF1_GNE"/>
    <property type="match status" value="1"/>
</dbReference>
<dbReference type="SUPFAM" id="SSF54984">
    <property type="entry name" value="eEF-1beta-like"/>
    <property type="match status" value="1"/>
</dbReference>
<organism>
    <name type="scientific">Halorubrum lacusprofundi (strain ATCC 49239 / DSM 5036 / JCM 8891 / ACAM 34)</name>
    <dbReference type="NCBI Taxonomy" id="416348"/>
    <lineage>
        <taxon>Archaea</taxon>
        <taxon>Methanobacteriati</taxon>
        <taxon>Methanobacteriota</taxon>
        <taxon>Stenosarchaea group</taxon>
        <taxon>Halobacteria</taxon>
        <taxon>Halobacteriales</taxon>
        <taxon>Haloferacaceae</taxon>
        <taxon>Halorubrum</taxon>
    </lineage>
</organism>
<gene>
    <name evidence="1" type="primary">ef1b</name>
    <name type="ordered locus">Hlac_2341</name>
</gene>
<protein>
    <recommendedName>
        <fullName evidence="1">Elongation factor 1-beta</fullName>
        <shortName evidence="1">EF-1-beta</shortName>
    </recommendedName>
    <alternativeName>
        <fullName evidence="1">aEF-1beta</fullName>
    </alternativeName>
</protein>
<accession>B9LSH0</accession>
<sequence length="88" mass="9291">MGDVAAKIKVMPNSPDIDLDDLQDRLEESLPQGAKIRGFQRDDVAFGLVALLPTVIVPDGAGGTEAVEEAFNEVDGVESVAVENVGRL</sequence>
<keyword id="KW-0251">Elongation factor</keyword>
<keyword id="KW-0648">Protein biosynthesis</keyword>
<keyword id="KW-1185">Reference proteome</keyword>
<proteinExistence type="inferred from homology"/>